<organism>
    <name type="scientific">Nitratidesulfovibrio vulgaris (strain DP4)</name>
    <name type="common">Desulfovibrio vulgaris</name>
    <dbReference type="NCBI Taxonomy" id="391774"/>
    <lineage>
        <taxon>Bacteria</taxon>
        <taxon>Pseudomonadati</taxon>
        <taxon>Thermodesulfobacteriota</taxon>
        <taxon>Desulfovibrionia</taxon>
        <taxon>Desulfovibrionales</taxon>
        <taxon>Desulfovibrionaceae</taxon>
        <taxon>Nitratidesulfovibrio</taxon>
    </lineage>
</organism>
<protein>
    <recommendedName>
        <fullName evidence="1">Triosephosphate isomerase</fullName>
        <shortName evidence="1">TIM</shortName>
        <shortName evidence="1">TPI</shortName>
        <ecNumber evidence="1">5.3.1.1</ecNumber>
    </recommendedName>
    <alternativeName>
        <fullName evidence="1">Triose-phosphate isomerase</fullName>
    </alternativeName>
</protein>
<proteinExistence type="inferred from homology"/>
<gene>
    <name evidence="1" type="primary">tpiA</name>
    <name type="ordered locus">Dvul_1410</name>
</gene>
<comment type="function">
    <text evidence="1">Involved in the gluconeogenesis. Catalyzes stereospecifically the conversion of dihydroxyacetone phosphate (DHAP) to D-glyceraldehyde-3-phosphate (G3P).</text>
</comment>
<comment type="catalytic activity">
    <reaction evidence="1">
        <text>D-glyceraldehyde 3-phosphate = dihydroxyacetone phosphate</text>
        <dbReference type="Rhea" id="RHEA:18585"/>
        <dbReference type="ChEBI" id="CHEBI:57642"/>
        <dbReference type="ChEBI" id="CHEBI:59776"/>
        <dbReference type="EC" id="5.3.1.1"/>
    </reaction>
</comment>
<comment type="pathway">
    <text evidence="1">Carbohydrate biosynthesis; gluconeogenesis.</text>
</comment>
<comment type="pathway">
    <text evidence="1">Carbohydrate degradation; glycolysis; D-glyceraldehyde 3-phosphate from glycerone phosphate: step 1/1.</text>
</comment>
<comment type="subunit">
    <text evidence="1">Homodimer.</text>
</comment>
<comment type="subcellular location">
    <subcellularLocation>
        <location evidence="1">Cytoplasm</location>
    </subcellularLocation>
</comment>
<comment type="similarity">
    <text evidence="1">Belongs to the triosephosphate isomerase family.</text>
</comment>
<keyword id="KW-0963">Cytoplasm</keyword>
<keyword id="KW-0312">Gluconeogenesis</keyword>
<keyword id="KW-0324">Glycolysis</keyword>
<keyword id="KW-0413">Isomerase</keyword>
<accession>A1VDB2</accession>
<evidence type="ECO:0000255" key="1">
    <source>
        <dbReference type="HAMAP-Rule" id="MF_00147"/>
    </source>
</evidence>
<reference key="1">
    <citation type="journal article" date="2009" name="Environ. Microbiol.">
        <title>Contribution of mobile genetic elements to Desulfovibrio vulgaris genome plasticity.</title>
        <authorList>
            <person name="Walker C.B."/>
            <person name="Stolyar S."/>
            <person name="Chivian D."/>
            <person name="Pinel N."/>
            <person name="Gabster J.A."/>
            <person name="Dehal P.S."/>
            <person name="He Z."/>
            <person name="Yang Z.K."/>
            <person name="Yen H.C."/>
            <person name="Zhou J."/>
            <person name="Wall J.D."/>
            <person name="Hazen T.C."/>
            <person name="Arkin A.P."/>
            <person name="Stahl D.A."/>
        </authorList>
    </citation>
    <scope>NUCLEOTIDE SEQUENCE [LARGE SCALE GENOMIC DNA]</scope>
    <source>
        <strain>DP4</strain>
    </source>
</reference>
<feature type="chain" id="PRO_1000071485" description="Triosephosphate isomerase">
    <location>
        <begin position="1"/>
        <end position="251"/>
    </location>
</feature>
<feature type="active site" description="Electrophile" evidence="1">
    <location>
        <position position="97"/>
    </location>
</feature>
<feature type="active site" description="Proton acceptor" evidence="1">
    <location>
        <position position="170"/>
    </location>
</feature>
<feature type="binding site" evidence="1">
    <location>
        <begin position="8"/>
        <end position="10"/>
    </location>
    <ligand>
        <name>substrate</name>
    </ligand>
</feature>
<feature type="binding site" evidence="1">
    <location>
        <position position="176"/>
    </location>
    <ligand>
        <name>substrate</name>
    </ligand>
</feature>
<feature type="binding site" evidence="1">
    <location>
        <position position="215"/>
    </location>
    <ligand>
        <name>substrate</name>
    </ligand>
</feature>
<feature type="binding site" evidence="1">
    <location>
        <begin position="236"/>
        <end position="237"/>
    </location>
    <ligand>
        <name>substrate</name>
    </ligand>
</feature>
<sequence>MKKLIAANWKMYKTIDEARATGRELVSAVAGSLPADREVLVCPPFTALHALHDTFKDVEGFAIGGQDVYPATEGAYTGEIAPGMLLDAGCGWVLTGHSERRHILGEDDETVARKTAFSLKAGLRVVLCIGEKLDEREAGRLEDVLAHQLQVGLADVDATYVPQSLVVAYEPVWAIGTGKVAGPAEVVEAHALVRSLLEARYGRDGAAIRILYGGSVKPDNAAELLSLDNVDGLLVGGASLQAVSFSRIILA</sequence>
<dbReference type="EC" id="5.3.1.1" evidence="1"/>
<dbReference type="EMBL" id="CP000527">
    <property type="protein sequence ID" value="ABM28428.1"/>
    <property type="molecule type" value="Genomic_DNA"/>
</dbReference>
<dbReference type="RefSeq" id="WP_010938966.1">
    <property type="nucleotide sequence ID" value="NC_008751.1"/>
</dbReference>
<dbReference type="SMR" id="A1VDB2"/>
<dbReference type="KEGG" id="dvl:Dvul_1410"/>
<dbReference type="HOGENOM" id="CLU_024251_2_0_7"/>
<dbReference type="UniPathway" id="UPA00109">
    <property type="reaction ID" value="UER00189"/>
</dbReference>
<dbReference type="UniPathway" id="UPA00138"/>
<dbReference type="Proteomes" id="UP000009173">
    <property type="component" value="Chromosome"/>
</dbReference>
<dbReference type="GO" id="GO:0005829">
    <property type="term" value="C:cytosol"/>
    <property type="evidence" value="ECO:0007669"/>
    <property type="project" value="TreeGrafter"/>
</dbReference>
<dbReference type="GO" id="GO:0004807">
    <property type="term" value="F:triose-phosphate isomerase activity"/>
    <property type="evidence" value="ECO:0007669"/>
    <property type="project" value="UniProtKB-UniRule"/>
</dbReference>
<dbReference type="GO" id="GO:0006094">
    <property type="term" value="P:gluconeogenesis"/>
    <property type="evidence" value="ECO:0007669"/>
    <property type="project" value="UniProtKB-UniRule"/>
</dbReference>
<dbReference type="GO" id="GO:0046166">
    <property type="term" value="P:glyceraldehyde-3-phosphate biosynthetic process"/>
    <property type="evidence" value="ECO:0007669"/>
    <property type="project" value="TreeGrafter"/>
</dbReference>
<dbReference type="GO" id="GO:0019563">
    <property type="term" value="P:glycerol catabolic process"/>
    <property type="evidence" value="ECO:0007669"/>
    <property type="project" value="TreeGrafter"/>
</dbReference>
<dbReference type="GO" id="GO:0006096">
    <property type="term" value="P:glycolytic process"/>
    <property type="evidence" value="ECO:0007669"/>
    <property type="project" value="UniProtKB-UniRule"/>
</dbReference>
<dbReference type="CDD" id="cd00311">
    <property type="entry name" value="TIM"/>
    <property type="match status" value="1"/>
</dbReference>
<dbReference type="FunFam" id="3.20.20.70:FF:000016">
    <property type="entry name" value="Triosephosphate isomerase"/>
    <property type="match status" value="1"/>
</dbReference>
<dbReference type="Gene3D" id="3.20.20.70">
    <property type="entry name" value="Aldolase class I"/>
    <property type="match status" value="1"/>
</dbReference>
<dbReference type="HAMAP" id="MF_00147_B">
    <property type="entry name" value="TIM_B"/>
    <property type="match status" value="1"/>
</dbReference>
<dbReference type="InterPro" id="IPR013785">
    <property type="entry name" value="Aldolase_TIM"/>
</dbReference>
<dbReference type="InterPro" id="IPR035990">
    <property type="entry name" value="TIM_sf"/>
</dbReference>
<dbReference type="InterPro" id="IPR022896">
    <property type="entry name" value="TrioseP_Isoase_bac/euk"/>
</dbReference>
<dbReference type="InterPro" id="IPR000652">
    <property type="entry name" value="Triosephosphate_isomerase"/>
</dbReference>
<dbReference type="InterPro" id="IPR020861">
    <property type="entry name" value="Triosephosphate_isomerase_AS"/>
</dbReference>
<dbReference type="NCBIfam" id="TIGR00419">
    <property type="entry name" value="tim"/>
    <property type="match status" value="1"/>
</dbReference>
<dbReference type="PANTHER" id="PTHR21139">
    <property type="entry name" value="TRIOSEPHOSPHATE ISOMERASE"/>
    <property type="match status" value="1"/>
</dbReference>
<dbReference type="PANTHER" id="PTHR21139:SF42">
    <property type="entry name" value="TRIOSEPHOSPHATE ISOMERASE"/>
    <property type="match status" value="1"/>
</dbReference>
<dbReference type="Pfam" id="PF00121">
    <property type="entry name" value="TIM"/>
    <property type="match status" value="1"/>
</dbReference>
<dbReference type="SUPFAM" id="SSF51351">
    <property type="entry name" value="Triosephosphate isomerase (TIM)"/>
    <property type="match status" value="1"/>
</dbReference>
<dbReference type="PROSITE" id="PS00171">
    <property type="entry name" value="TIM_1"/>
    <property type="match status" value="1"/>
</dbReference>
<dbReference type="PROSITE" id="PS51440">
    <property type="entry name" value="TIM_2"/>
    <property type="match status" value="1"/>
</dbReference>
<name>TPIS_NITV4</name>